<reference key="1">
    <citation type="journal article" date="1995" name="J. Biol. Chem.">
        <title>Heterogeneous nuclear ribonucleoproteins H, H', and F are members of a ubiquitously expressed subfamily of related but distinct proteins encoded by genes mapping to different chromosomes.</title>
        <authorList>
            <person name="Honore B."/>
            <person name="Rasmussen H.H."/>
            <person name="Vorum H."/>
            <person name="Dejgaard K."/>
            <person name="Liu X."/>
            <person name="Gromov P."/>
            <person name="Madsen P."/>
            <person name="Gesser B."/>
            <person name="Tommerup N."/>
            <person name="Celis J.E."/>
        </authorList>
    </citation>
    <scope>NUCLEOTIDE SEQUENCE [MRNA]</scope>
    <scope>PROTEIN SEQUENCE OF 180-184; 193-197 AND 200-230</scope>
</reference>
<reference key="2">
    <citation type="submission" date="2004-06" db="EMBL/GenBank/DDBJ databases">
        <title>Cloning of human full open reading frames in Gateway(TM) system entry vector (pDONR201).</title>
        <authorList>
            <person name="Ebert L."/>
            <person name="Schick M."/>
            <person name="Neubert P."/>
            <person name="Schatten R."/>
            <person name="Henze S."/>
            <person name="Korn B."/>
        </authorList>
    </citation>
    <scope>NUCLEOTIDE SEQUENCE [LARGE SCALE MRNA]</scope>
</reference>
<reference key="3">
    <citation type="journal article" date="2004" name="Nat. Genet.">
        <title>Complete sequencing and characterization of 21,243 full-length human cDNAs.</title>
        <authorList>
            <person name="Ota T."/>
            <person name="Suzuki Y."/>
            <person name="Nishikawa T."/>
            <person name="Otsuki T."/>
            <person name="Sugiyama T."/>
            <person name="Irie R."/>
            <person name="Wakamatsu A."/>
            <person name="Hayashi K."/>
            <person name="Sato H."/>
            <person name="Nagai K."/>
            <person name="Kimura K."/>
            <person name="Makita H."/>
            <person name="Sekine M."/>
            <person name="Obayashi M."/>
            <person name="Nishi T."/>
            <person name="Shibahara T."/>
            <person name="Tanaka T."/>
            <person name="Ishii S."/>
            <person name="Yamamoto J."/>
            <person name="Saito K."/>
            <person name="Kawai Y."/>
            <person name="Isono Y."/>
            <person name="Nakamura Y."/>
            <person name="Nagahari K."/>
            <person name="Murakami K."/>
            <person name="Yasuda T."/>
            <person name="Iwayanagi T."/>
            <person name="Wagatsuma M."/>
            <person name="Shiratori A."/>
            <person name="Sudo H."/>
            <person name="Hosoiri T."/>
            <person name="Kaku Y."/>
            <person name="Kodaira H."/>
            <person name="Kondo H."/>
            <person name="Sugawara M."/>
            <person name="Takahashi M."/>
            <person name="Kanda K."/>
            <person name="Yokoi T."/>
            <person name="Furuya T."/>
            <person name="Kikkawa E."/>
            <person name="Omura Y."/>
            <person name="Abe K."/>
            <person name="Kamihara K."/>
            <person name="Katsuta N."/>
            <person name="Sato K."/>
            <person name="Tanikawa M."/>
            <person name="Yamazaki M."/>
            <person name="Ninomiya K."/>
            <person name="Ishibashi T."/>
            <person name="Yamashita H."/>
            <person name="Murakawa K."/>
            <person name="Fujimori K."/>
            <person name="Tanai H."/>
            <person name="Kimata M."/>
            <person name="Watanabe M."/>
            <person name="Hiraoka S."/>
            <person name="Chiba Y."/>
            <person name="Ishida S."/>
            <person name="Ono Y."/>
            <person name="Takiguchi S."/>
            <person name="Watanabe S."/>
            <person name="Yosida M."/>
            <person name="Hotuta T."/>
            <person name="Kusano J."/>
            <person name="Kanehori K."/>
            <person name="Takahashi-Fujii A."/>
            <person name="Hara H."/>
            <person name="Tanase T.-O."/>
            <person name="Nomura Y."/>
            <person name="Togiya S."/>
            <person name="Komai F."/>
            <person name="Hara R."/>
            <person name="Takeuchi K."/>
            <person name="Arita M."/>
            <person name="Imose N."/>
            <person name="Musashino K."/>
            <person name="Yuuki H."/>
            <person name="Oshima A."/>
            <person name="Sasaki N."/>
            <person name="Aotsuka S."/>
            <person name="Yoshikawa Y."/>
            <person name="Matsunawa H."/>
            <person name="Ichihara T."/>
            <person name="Shiohata N."/>
            <person name="Sano S."/>
            <person name="Moriya S."/>
            <person name="Momiyama H."/>
            <person name="Satoh N."/>
            <person name="Takami S."/>
            <person name="Terashima Y."/>
            <person name="Suzuki O."/>
            <person name="Nakagawa S."/>
            <person name="Senoh A."/>
            <person name="Mizoguchi H."/>
            <person name="Goto Y."/>
            <person name="Shimizu F."/>
            <person name="Wakebe H."/>
            <person name="Hishigaki H."/>
            <person name="Watanabe T."/>
            <person name="Sugiyama A."/>
            <person name="Takemoto M."/>
            <person name="Kawakami B."/>
            <person name="Yamazaki M."/>
            <person name="Watanabe K."/>
            <person name="Kumagai A."/>
            <person name="Itakura S."/>
            <person name="Fukuzumi Y."/>
            <person name="Fujimori Y."/>
            <person name="Komiyama M."/>
            <person name="Tashiro H."/>
            <person name="Tanigami A."/>
            <person name="Fujiwara T."/>
            <person name="Ono T."/>
            <person name="Yamada K."/>
            <person name="Fujii Y."/>
            <person name="Ozaki K."/>
            <person name="Hirao M."/>
            <person name="Ohmori Y."/>
            <person name="Kawabata A."/>
            <person name="Hikiji T."/>
            <person name="Kobatake N."/>
            <person name="Inagaki H."/>
            <person name="Ikema Y."/>
            <person name="Okamoto S."/>
            <person name="Okitani R."/>
            <person name="Kawakami T."/>
            <person name="Noguchi S."/>
            <person name="Itoh T."/>
            <person name="Shigeta K."/>
            <person name="Senba T."/>
            <person name="Matsumura K."/>
            <person name="Nakajima Y."/>
            <person name="Mizuno T."/>
            <person name="Morinaga M."/>
            <person name="Sasaki M."/>
            <person name="Togashi T."/>
            <person name="Oyama M."/>
            <person name="Hata H."/>
            <person name="Watanabe M."/>
            <person name="Komatsu T."/>
            <person name="Mizushima-Sugano J."/>
            <person name="Satoh T."/>
            <person name="Shirai Y."/>
            <person name="Takahashi Y."/>
            <person name="Nakagawa K."/>
            <person name="Okumura K."/>
            <person name="Nagase T."/>
            <person name="Nomura N."/>
            <person name="Kikuchi H."/>
            <person name="Masuho Y."/>
            <person name="Yamashita R."/>
            <person name="Nakai K."/>
            <person name="Yada T."/>
            <person name="Nakamura Y."/>
            <person name="Ohara O."/>
            <person name="Isogai T."/>
            <person name="Sugano S."/>
        </authorList>
    </citation>
    <scope>NUCLEOTIDE SEQUENCE [LARGE SCALE MRNA]</scope>
    <source>
        <tissue>Cerebellum</tissue>
    </source>
</reference>
<reference key="4">
    <citation type="submission" date="2005-09" db="EMBL/GenBank/DDBJ databases">
        <authorList>
            <person name="Mural R.J."/>
            <person name="Istrail S."/>
            <person name="Sutton G.G."/>
            <person name="Florea L."/>
            <person name="Halpern A.L."/>
            <person name="Mobarry C.M."/>
            <person name="Lippert R."/>
            <person name="Walenz B."/>
            <person name="Shatkay H."/>
            <person name="Dew I."/>
            <person name="Miller J.R."/>
            <person name="Flanigan M.J."/>
            <person name="Edwards N.J."/>
            <person name="Bolanos R."/>
            <person name="Fasulo D."/>
            <person name="Halldorsson B.V."/>
            <person name="Hannenhalli S."/>
            <person name="Turner R."/>
            <person name="Yooseph S."/>
            <person name="Lu F."/>
            <person name="Nusskern D.R."/>
            <person name="Shue B.C."/>
            <person name="Zheng X.H."/>
            <person name="Zhong F."/>
            <person name="Delcher A.L."/>
            <person name="Huson D.H."/>
            <person name="Kravitz S.A."/>
            <person name="Mouchard L."/>
            <person name="Reinert K."/>
            <person name="Remington K.A."/>
            <person name="Clark A.G."/>
            <person name="Waterman M.S."/>
            <person name="Eichler E.E."/>
            <person name="Adams M.D."/>
            <person name="Hunkapiller M.W."/>
            <person name="Myers E.W."/>
            <person name="Venter J.C."/>
        </authorList>
    </citation>
    <scope>NUCLEOTIDE SEQUENCE [LARGE SCALE GENOMIC DNA]</scope>
</reference>
<reference key="5">
    <citation type="journal article" date="2004" name="Genome Res.">
        <title>The status, quality, and expansion of the NIH full-length cDNA project: the Mammalian Gene Collection (MGC).</title>
        <authorList>
            <consortium name="The MGC Project Team"/>
        </authorList>
    </citation>
    <scope>NUCLEOTIDE SEQUENCE [LARGE SCALE MRNA]</scope>
    <source>
        <tissue>Muscle</tissue>
    </source>
</reference>
<reference key="6">
    <citation type="submission" date="2008-12" db="UniProtKB">
        <authorList>
            <person name="Bienvenut W.V."/>
            <person name="Boldt K."/>
            <person name="von Kriegsheim A."/>
            <person name="Matallanas D."/>
            <person name="Cooper W.N."/>
            <person name="Calvo F."/>
            <person name="Kolch W."/>
            <person name="Vousden K.H."/>
            <person name="Lukashchuk N."/>
            <person name="Lilla S."/>
            <person name="Lempens A."/>
        </authorList>
    </citation>
    <scope>PROTEIN SEQUENCE OF 1-14; 17-44; 50-68; 82-114; 151-167; 180-185; 233-259; 276-294; 300-347 AND 356-375</scope>
    <scope>CLEAVAGE OF INITIATOR METHIONINE</scope>
    <scope>ACETYLATION AT MET-1 AND MET-2</scope>
    <scope>METHYLATION AT ARG-233</scope>
    <scope>IDENTIFICATION BY MASS SPECTROMETRY</scope>
    <source>
        <tissue>B-cell lymphoma</tissue>
        <tissue>Cervix carcinoma</tissue>
        <tissue>Hepatoma</tissue>
        <tissue>Lung carcinoma</tissue>
        <tissue>Mammary carcinoma</tissue>
        <tissue>Ovarian carcinoma</tissue>
    </source>
</reference>
<reference key="7">
    <citation type="submission" date="2008-12" db="UniProtKB">
        <authorList>
            <person name="Lubec G."/>
            <person name="Vishwanath V."/>
            <person name="Chen W.-Q."/>
            <person name="Sun Y."/>
        </authorList>
    </citation>
    <scope>PROTEIN SEQUENCE OF 2-14; 17-29; 88-114; 151-167; 263-275; 300-347; 344-375; 377-386; 418-432; 473-483 AND 542-553</scope>
    <scope>IDENTIFICATION BY MASS SPECTROMETRY</scope>
    <source>
        <tissue>Brain</tissue>
        <tissue>Cajal-Retzius cell</tissue>
        <tissue>Fetal brain cortex</tissue>
    </source>
</reference>
<reference key="8">
    <citation type="journal article" date="1994" name="Nucleic Acids Res.">
        <title>The hnRNP F protein: unique primary structure, nucleic acid-binding properties, and subcellular localization.</title>
        <authorList>
            <person name="Matunis M.J."/>
            <person name="Xing J."/>
            <person name="Dreyfuss G."/>
        </authorList>
    </citation>
    <scope>PROTEIN SEQUENCE OF 127-135 AND 153-163</scope>
</reference>
<reference key="9">
    <citation type="journal article" date="1992" name="Electrophoresis">
        <title>Microsequences of 145 proteins recorded in the two-dimensional gel protein database of normal human epidermal keratinocytes.</title>
        <authorList>
            <person name="Rasmussen H.H."/>
            <person name="van Damme J."/>
            <person name="Puype M."/>
            <person name="Gesser B."/>
            <person name="Celis J.E."/>
            <person name="Vandekerckhove J."/>
        </authorList>
    </citation>
    <scope>PROTEIN SEQUENCE OF 200-230</scope>
    <source>
        <tissue>Keratinocyte</tissue>
    </source>
</reference>
<reference key="10">
    <citation type="journal article" date="2000" name="Mol. Cell. Biol.">
        <title>Cooperative assembly of an hnRNP complex induced by a tissue-specific homolog of polypyrimidine tract binding protein.</title>
        <authorList>
            <person name="Markovtsov V."/>
            <person name="Nikolic J.M."/>
            <person name="Goldman J.A."/>
            <person name="Turck C.W."/>
            <person name="Chou M.-Y."/>
            <person name="Black D.L."/>
        </authorList>
    </citation>
    <scope>FUNCTION</scope>
    <scope>INTERACTION WITH PTBP1; PTBP2 AND FUBP2</scope>
</reference>
<reference key="11">
    <citation type="journal article" date="2002" name="RNA">
        <title>Purification and characterization of native spliceosomes suitable for three-dimensional structural analysis.</title>
        <authorList>
            <person name="Jurica M.S."/>
            <person name="Licklider L.J."/>
            <person name="Gygi S.P."/>
            <person name="Grigorieff N."/>
            <person name="Moore M.J."/>
        </authorList>
    </citation>
    <scope>IDENTIFICATION BY MASS SPECTROMETRY</scope>
    <scope>IDENTIFICATION IN THE SPLICEOSOMAL C COMPLEX</scope>
</reference>
<reference key="12">
    <citation type="journal article" date="2005" name="Nat. Biotechnol.">
        <title>Immunoaffinity profiling of tyrosine phosphorylation in cancer cells.</title>
        <authorList>
            <person name="Rush J."/>
            <person name="Moritz A."/>
            <person name="Lee K.A."/>
            <person name="Guo A."/>
            <person name="Goss V.L."/>
            <person name="Spek E.J."/>
            <person name="Zhang H."/>
            <person name="Zha X.-M."/>
            <person name="Polakiewicz R.D."/>
            <person name="Comb M.J."/>
        </authorList>
    </citation>
    <scope>PHOSPHORYLATION [LARGE SCALE ANALYSIS] AT TYR-246</scope>
    <scope>IDENTIFICATION BY MASS SPECTROMETRY [LARGE SCALE ANALYSIS]</scope>
</reference>
<reference key="13">
    <citation type="journal article" date="2006" name="Cell">
        <title>Global, in vivo, and site-specific phosphorylation dynamics in signaling networks.</title>
        <authorList>
            <person name="Olsen J.V."/>
            <person name="Blagoev B."/>
            <person name="Gnad F."/>
            <person name="Macek B."/>
            <person name="Kumar C."/>
            <person name="Mortensen P."/>
            <person name="Mann M."/>
        </authorList>
    </citation>
    <scope>PHOSPHORYLATION [LARGE SCALE ANALYSIS] AT SER-63</scope>
    <scope>IDENTIFICATION BY MASS SPECTROMETRY [LARGE SCALE ANALYSIS]</scope>
    <source>
        <tissue>Cervix carcinoma</tissue>
    </source>
</reference>
<reference key="14">
    <citation type="journal article" date="2006" name="EMBO J.">
        <title>Interaction of muscleblind, CUG-BP1 and hnRNP H proteins in DM1-associated aberrant IR splicing.</title>
        <authorList>
            <person name="Paul S."/>
            <person name="Dansithong W."/>
            <person name="Kim D."/>
            <person name="Rossi J."/>
            <person name="Webster N.J."/>
            <person name="Comai L."/>
            <person name="Reddy S."/>
        </authorList>
    </citation>
    <scope>FUNCTION</scope>
    <scope>INTERACTION WITH CUGBP1 AND MBNL1</scope>
    <scope>RNA-BINDING</scope>
    <scope>INDUCTION</scope>
</reference>
<reference key="15">
    <citation type="journal article" date="2007" name="Mol. Cell. Proteomics">
        <title>Molecular composition of IMP1 ribonucleoprotein granules.</title>
        <authorList>
            <person name="Joeson L."/>
            <person name="Vikesaa J."/>
            <person name="Krogh A."/>
            <person name="Nielsen L.K."/>
            <person name="Hansen T."/>
            <person name="Borup R."/>
            <person name="Johnsen A.H."/>
            <person name="Christiansen J."/>
            <person name="Nielsen F.C."/>
        </authorList>
    </citation>
    <scope>INTERACTION WITH IGF2BP1</scope>
</reference>
<reference key="16">
    <citation type="journal article" date="2008" name="Mol. Cell">
        <title>Kinase-selective enrichment enables quantitative phosphoproteomics of the kinome across the cell cycle.</title>
        <authorList>
            <person name="Daub H."/>
            <person name="Olsen J.V."/>
            <person name="Bairlein M."/>
            <person name="Gnad F."/>
            <person name="Oppermann F.S."/>
            <person name="Korner R."/>
            <person name="Greff Z."/>
            <person name="Keri G."/>
            <person name="Stemmann O."/>
            <person name="Mann M."/>
        </authorList>
    </citation>
    <scope>PHOSPHORYLATION [LARGE SCALE ANALYSIS] AT SER-63</scope>
    <scope>IDENTIFICATION BY MASS SPECTROMETRY [LARGE SCALE ANALYSIS]</scope>
    <source>
        <tissue>Cervix carcinoma</tissue>
    </source>
</reference>
<reference key="17">
    <citation type="journal article" date="2008" name="Proc. Natl. Acad. Sci. U.S.A.">
        <title>A quantitative atlas of mitotic phosphorylation.</title>
        <authorList>
            <person name="Dephoure N."/>
            <person name="Zhou C."/>
            <person name="Villen J."/>
            <person name="Beausoleil S.A."/>
            <person name="Bakalarski C.E."/>
            <person name="Elledge S.J."/>
            <person name="Gygi S.P."/>
        </authorList>
    </citation>
    <scope>PHOSPHORYLATION [LARGE SCALE ANALYSIS] AT SER-63</scope>
    <scope>IDENTIFICATION BY MASS SPECTROMETRY [LARGE SCALE ANALYSIS]</scope>
    <source>
        <tissue>Cervix carcinoma</tissue>
    </source>
</reference>
<reference key="18">
    <citation type="journal article" date="2009" name="Anal. Chem.">
        <title>Lys-N and trypsin cover complementary parts of the phosphoproteome in a refined SCX-based approach.</title>
        <authorList>
            <person name="Gauci S."/>
            <person name="Helbig A.O."/>
            <person name="Slijper M."/>
            <person name="Krijgsveld J."/>
            <person name="Heck A.J."/>
            <person name="Mohammed S."/>
        </authorList>
    </citation>
    <scope>ACETYLATION [LARGE SCALE ANALYSIS] AT MET-1 AND MET-2</scope>
    <scope>CLEAVAGE OF INITIATOR METHIONINE [LARGE SCALE ANALYSIS]</scope>
    <scope>IDENTIFICATION BY MASS SPECTROMETRY [LARGE SCALE ANALYSIS]</scope>
</reference>
<reference key="19">
    <citation type="journal article" date="2009" name="Sci. Signal.">
        <title>Quantitative phosphoproteomic analysis of T cell receptor signaling reveals system-wide modulation of protein-protein interactions.</title>
        <authorList>
            <person name="Mayya V."/>
            <person name="Lundgren D.H."/>
            <person name="Hwang S.-I."/>
            <person name="Rezaul K."/>
            <person name="Wu L."/>
            <person name="Eng J.K."/>
            <person name="Rodionov V."/>
            <person name="Han D.K."/>
        </authorList>
    </citation>
    <scope>PHOSPHORYLATION [LARGE SCALE ANALYSIS] AT SER-23 AND SER-63</scope>
    <scope>IDENTIFICATION BY MASS SPECTROMETRY [LARGE SCALE ANALYSIS]</scope>
    <source>
        <tissue>Leukemic T-cell</tissue>
    </source>
</reference>
<reference key="20">
    <citation type="journal article" date="2010" name="Sci. Signal.">
        <title>Quantitative phosphoproteomics reveals widespread full phosphorylation site occupancy during mitosis.</title>
        <authorList>
            <person name="Olsen J.V."/>
            <person name="Vermeulen M."/>
            <person name="Santamaria A."/>
            <person name="Kumar C."/>
            <person name="Miller M.L."/>
            <person name="Jensen L.J."/>
            <person name="Gnad F."/>
            <person name="Cox J."/>
            <person name="Jensen T.S."/>
            <person name="Nigg E.A."/>
            <person name="Brunak S."/>
            <person name="Mann M."/>
        </authorList>
    </citation>
    <scope>PHOSPHORYLATION [LARGE SCALE ANALYSIS] AT SER-63</scope>
    <scope>IDENTIFICATION BY MASS SPECTROMETRY [LARGE SCALE ANALYSIS]</scope>
    <source>
        <tissue>Cervix carcinoma</tissue>
    </source>
</reference>
<reference key="21">
    <citation type="journal article" date="2011" name="BMC Syst. Biol.">
        <title>Initial characterization of the human central proteome.</title>
        <authorList>
            <person name="Burkard T.R."/>
            <person name="Planyavsky M."/>
            <person name="Kaupe I."/>
            <person name="Breitwieser F.P."/>
            <person name="Buerckstuemmer T."/>
            <person name="Bennett K.L."/>
            <person name="Superti-Furga G."/>
            <person name="Colinge J."/>
        </authorList>
    </citation>
    <scope>IDENTIFICATION BY MASS SPECTROMETRY [LARGE SCALE ANALYSIS]</scope>
</reference>
<reference key="22">
    <citation type="journal article" date="2011" name="Sci. Signal.">
        <title>System-wide temporal characterization of the proteome and phosphoproteome of human embryonic stem cell differentiation.</title>
        <authorList>
            <person name="Rigbolt K.T."/>
            <person name="Prokhorova T.A."/>
            <person name="Akimov V."/>
            <person name="Henningsen J."/>
            <person name="Johansen P.T."/>
            <person name="Kratchmarova I."/>
            <person name="Kassem M."/>
            <person name="Mann M."/>
            <person name="Olsen J.V."/>
            <person name="Blagoev B."/>
        </authorList>
    </citation>
    <scope>PHOSPHORYLATION [LARGE SCALE ANALYSIS] AT SER-63</scope>
    <scope>IDENTIFICATION BY MASS SPECTROMETRY [LARGE SCALE ANALYSIS]</scope>
</reference>
<reference key="23">
    <citation type="journal article" date="2012" name="Mol. Cell. Proteomics">
        <title>Comparative large-scale characterisation of plant vs. mammal proteins reveals similar and idiosyncratic N-alpha acetylation features.</title>
        <authorList>
            <person name="Bienvenut W.V."/>
            <person name="Sumpton D."/>
            <person name="Martinez A."/>
            <person name="Lilla S."/>
            <person name="Espagne C."/>
            <person name="Meinnel T."/>
            <person name="Giglione C."/>
        </authorList>
    </citation>
    <scope>ACETYLATION [LARGE SCALE ANALYSIS] AT MET-2</scope>
    <scope>CLEAVAGE OF INITIATOR METHIONINE [LARGE SCALE ANALYSIS]</scope>
    <scope>IDENTIFICATION BY MASS SPECTROMETRY [LARGE SCALE ANALYSIS]</scope>
</reference>
<reference key="24">
    <citation type="journal article" date="2012" name="Proc. Natl. Acad. Sci. U.S.A.">
        <title>N-terminal acetylome analyses and functional insights of the N-terminal acetyltransferase NatB.</title>
        <authorList>
            <person name="Van Damme P."/>
            <person name="Lasa M."/>
            <person name="Polevoda B."/>
            <person name="Gazquez C."/>
            <person name="Elosegui-Artola A."/>
            <person name="Kim D.S."/>
            <person name="De Juan-Pardo E."/>
            <person name="Demeyer K."/>
            <person name="Hole K."/>
            <person name="Larrea E."/>
            <person name="Timmerman E."/>
            <person name="Prieto J."/>
            <person name="Arnesen T."/>
            <person name="Sherman F."/>
            <person name="Gevaert K."/>
            <person name="Aldabe R."/>
        </authorList>
    </citation>
    <scope>ACETYLATION [LARGE SCALE ANALYSIS] AT MET-1 AND MET-2</scope>
    <scope>CLEAVAGE OF INITIATOR METHIONINE [LARGE SCALE ANALYSIS]</scope>
    <scope>IDENTIFICATION BY MASS SPECTROMETRY [LARGE SCALE ANALYSIS]</scope>
</reference>
<reference key="25">
    <citation type="journal article" date="2013" name="J. Proteome Res.">
        <title>Toward a comprehensive characterization of a human cancer cell phosphoproteome.</title>
        <authorList>
            <person name="Zhou H."/>
            <person name="Di Palma S."/>
            <person name="Preisinger C."/>
            <person name="Peng M."/>
            <person name="Polat A.N."/>
            <person name="Heck A.J."/>
            <person name="Mohammed S."/>
        </authorList>
    </citation>
    <scope>PHOSPHORYLATION [LARGE SCALE ANALYSIS] AT SER-23; SER-54 AND SER-63</scope>
    <scope>IDENTIFICATION BY MASS SPECTROMETRY [LARGE SCALE ANALYSIS]</scope>
    <source>
        <tissue>Cervix carcinoma</tissue>
        <tissue>Erythroleukemia</tissue>
    </source>
</reference>
<reference key="26">
    <citation type="journal article" date="2014" name="J. Proteomics">
        <title>An enzyme assisted RP-RPLC approach for in-depth analysis of human liver phosphoproteome.</title>
        <authorList>
            <person name="Bian Y."/>
            <person name="Song C."/>
            <person name="Cheng K."/>
            <person name="Dong M."/>
            <person name="Wang F."/>
            <person name="Huang J."/>
            <person name="Sun D."/>
            <person name="Wang L."/>
            <person name="Ye M."/>
            <person name="Zou H."/>
        </authorList>
    </citation>
    <scope>IDENTIFICATION BY MASS SPECTROMETRY [LARGE SCALE ANALYSIS]</scope>
    <source>
        <tissue>Liver</tissue>
    </source>
</reference>
<reference key="27">
    <citation type="journal article" date="2014" name="Mol. Cell. Proteomics">
        <title>Immunoaffinity enrichment and mass spectrometry analysis of protein methylation.</title>
        <authorList>
            <person name="Guo A."/>
            <person name="Gu H."/>
            <person name="Zhou J."/>
            <person name="Mulhern D."/>
            <person name="Wang Y."/>
            <person name="Lee K.A."/>
            <person name="Yang V."/>
            <person name="Aguiar M."/>
            <person name="Kornhauser J."/>
            <person name="Jia X."/>
            <person name="Ren J."/>
            <person name="Beausoleil S.A."/>
            <person name="Silva J.C."/>
            <person name="Vemulapalli V."/>
            <person name="Bedford M.T."/>
            <person name="Comb M.J."/>
        </authorList>
    </citation>
    <scope>METHYLATION [LARGE SCALE ANALYSIS] AT ARG-233</scope>
    <scope>IDENTIFICATION BY MASS SPECTROMETRY [LARGE SCALE ANALYSIS]</scope>
    <source>
        <tissue>Colon carcinoma</tissue>
    </source>
</reference>
<reference key="28">
    <citation type="journal article" date="2017" name="Nat. Struct. Mol. Biol.">
        <title>Site-specific mapping of the human SUMO proteome reveals co-modification with phosphorylation.</title>
        <authorList>
            <person name="Hendriks I.A."/>
            <person name="Lyon D."/>
            <person name="Young C."/>
            <person name="Jensen L.J."/>
            <person name="Vertegaal A.C."/>
            <person name="Nielsen M.L."/>
        </authorList>
    </citation>
    <scope>SUMOYLATION [LARGE SCALE ANALYSIS] AT LYS-35; LYS-87 AND LYS-98</scope>
    <scope>IDENTIFICATION BY MASS SPECTROMETRY [LARGE SCALE ANALYSIS]</scope>
</reference>
<reference key="29">
    <citation type="journal article" date="2018" name="Clin. Genet.">
        <title>Evidence for HNRNPH1 being another gene for Bain type syndromic mental retardation.</title>
        <authorList>
            <person name="Pilch J."/>
            <person name="Koppolu A.A."/>
            <person name="Walczak A."/>
            <person name="Murcia Pienkowski V.A."/>
            <person name="Biernacka A."/>
            <person name="Skiba P."/>
            <person name="Machnik-Broncel J."/>
            <person name="Gasperowicz P."/>
            <person name="Kosinska J."/>
            <person name="Rydzanicz M."/>
            <person name="Emich-Widera E."/>
            <person name="Ploski R."/>
        </authorList>
    </citation>
    <scope>VARIANT NEDCDS TRP-206</scope>
    <scope>INVOLVEMENT IN NEDCDS</scope>
</reference>
<reference key="30">
    <citation type="journal article" date="2020" name="Clin. Genet.">
        <title>HNRNPH1-related syndromic intellectual disability: Seven additional cases suggestive of a distinct syndromic neurodevelopmental syndrome.</title>
        <authorList>
            <person name="Reichert S.C."/>
            <person name="Li R."/>
            <person name="Turner S.A."/>
            <person name="van Jaarsveld R.H."/>
            <person name="Massink M.P.G."/>
            <person name="van den Boogaard M.H."/>
            <person name="Del Toro M."/>
            <person name="Rodriguez-Palmero A."/>
            <person name="Fourcade S."/>
            <person name="Schlueter A."/>
            <person name="Planas-Serra L."/>
            <person name="Pujol A."/>
            <person name="Iascone M."/>
            <person name="Maitz S."/>
            <person name="Loong L."/>
            <person name="Stewart H."/>
            <person name="De Franco E."/>
            <person name="Ellard S."/>
            <person name="Frank J."/>
            <person name="Lewandowski R."/>
        </authorList>
    </citation>
    <scope>VARIANTS NEDCDS GLN-206; TRP-206 AND 373-GLU--TYR-392 DEL</scope>
    <scope>INVOLVEMENT IN NEDCDS</scope>
</reference>
<gene>
    <name type="primary">HNRNPH1</name>
    <name type="synonym">HNRPH</name>
    <name type="synonym">HNRPH1</name>
</gene>
<comment type="function">
    <text evidence="3 5">This protein is a component of the heterogeneous nuclear ribonucleoprotein (hnRNP) complexes which provide the substrate for the processing events that pre-mRNAs undergo before becoming functional, translatable mRNAs in the cytoplasm. Mediates pre-mRNA alternative splicing regulation. Inhibits, together with CUGBP1, insulin receptor (IR) pre-mRNA exon 11 inclusion in myoblast. Binds to the IR RNA. Binds poly(RG).</text>
</comment>
<comment type="subunit">
    <text evidence="3 4 5 6">Part of a ternary complex containing FUBP2, PTBP1, PTBP2 and HNRNPH1. Identified in the spliceosome C complex. Interacts with IGF2BP1. Interacts with CUGBP1; the interaction is RNA-dependent. Interacts with MBNL1; the interaction in RNA-independent.</text>
</comment>
<comment type="interaction">
    <interactant intactId="EBI-351590">
        <id>P31943</id>
    </interactant>
    <interactant intactId="EBI-1057448">
        <id>Q5VV41</id>
        <label>ARHGEF16</label>
    </interactant>
    <organismsDiffer>false</organismsDiffer>
    <experiments>3</experiments>
</comment>
<comment type="interaction">
    <interactant intactId="EBI-351590">
        <id>P31943</id>
    </interactant>
    <interactant intactId="EBI-744545">
        <id>Q8NEC5</id>
        <label>CATSPER1</label>
    </interactant>
    <organismsDiffer>false</organismsDiffer>
    <experiments>3</experiments>
</comment>
<comment type="interaction">
    <interactant intactId="EBI-351590">
        <id>P31943</id>
    </interactant>
    <interactant intactId="EBI-744556">
        <id>Q96HB5</id>
        <label>CCDC120</label>
    </interactant>
    <organismsDiffer>false</organismsDiffer>
    <experiments>3</experiments>
</comment>
<comment type="interaction">
    <interactant intactId="EBI-351590">
        <id>P31943</id>
    </interactant>
    <interactant intactId="EBI-12010594">
        <id>O75909-2</id>
        <label>CCNK</label>
    </interactant>
    <organismsDiffer>false</organismsDiffer>
    <experiments>3</experiments>
</comment>
<comment type="interaction">
    <interactant intactId="EBI-351590">
        <id>P31943</id>
    </interactant>
    <interactant intactId="EBI-746012">
        <id>Q92841</id>
        <label>DDX17</label>
    </interactant>
    <organismsDiffer>false</organismsDiffer>
    <experiments>3</experiments>
</comment>
<comment type="interaction">
    <interactant intactId="EBI-351590">
        <id>P31943</id>
    </interactant>
    <interactant intactId="EBI-948630">
        <id>Q86Y13</id>
        <label>DZIP3</label>
    </interactant>
    <organismsDiffer>false</organismsDiffer>
    <experiments>3</experiments>
</comment>
<comment type="interaction">
    <interactant intactId="EBI-351590">
        <id>P31943</id>
    </interactant>
    <interactant intactId="EBI-744099">
        <id>Q9H0I2</id>
        <label>ENKD1</label>
    </interactant>
    <organismsDiffer>false</organismsDiffer>
    <experiments>3</experiments>
</comment>
<comment type="interaction">
    <interactant intactId="EBI-351590">
        <id>P31943</id>
    </interactant>
    <interactant intactId="EBI-751540">
        <id>O95872</id>
        <label>GPANK1</label>
    </interactant>
    <organismsDiffer>false</organismsDiffer>
    <experiments>3</experiments>
</comment>
<comment type="interaction">
    <interactant intactId="EBI-351590">
        <id>P31943</id>
    </interactant>
    <interactant intactId="EBI-713355">
        <id>Q13227</id>
        <label>GPS2</label>
    </interactant>
    <organismsDiffer>false</organismsDiffer>
    <experiments>3</experiments>
</comment>
<comment type="interaction">
    <interactant intactId="EBI-351590">
        <id>P31943</id>
    </interactant>
    <interactant intactId="EBI-352986">
        <id>P52597</id>
        <label>HNRNPF</label>
    </interactant>
    <organismsDiffer>false</organismsDiffer>
    <experiments>4</experiments>
</comment>
<comment type="interaction">
    <interactant intactId="EBI-351590">
        <id>P31943</id>
    </interactant>
    <interactant intactId="EBI-351590">
        <id>P31943</id>
        <label>HNRNPH1</label>
    </interactant>
    <organismsDiffer>false</organismsDiffer>
    <experiments>3</experiments>
</comment>
<comment type="interaction">
    <interactant intactId="EBI-351590">
        <id>P31943</id>
    </interactant>
    <interactant intactId="EBI-486809">
        <id>P52272</id>
        <label>HNRNPM</label>
    </interactant>
    <organismsDiffer>false</organismsDiffer>
    <experiments>4</experiments>
</comment>
<comment type="interaction">
    <interactant intactId="EBI-351590">
        <id>P31943</id>
    </interactant>
    <interactant intactId="EBI-11953846">
        <id>Q52LG2</id>
        <label>KRTAP13-2</label>
    </interactant>
    <organismsDiffer>false</organismsDiffer>
    <experiments>3</experiments>
</comment>
<comment type="interaction">
    <interactant intactId="EBI-351590">
        <id>P31943</id>
    </interactant>
    <interactant intactId="EBI-8639312">
        <id>P25800</id>
        <label>LMO1</label>
    </interactant>
    <organismsDiffer>false</organismsDiffer>
    <experiments>3</experiments>
</comment>
<comment type="interaction">
    <interactant intactId="EBI-351590">
        <id>P31943</id>
    </interactant>
    <interactant intactId="EBI-11742507">
        <id>Q8TAP4-4</id>
        <label>LMO3</label>
    </interactant>
    <organismsDiffer>false</organismsDiffer>
    <experiments>3</experiments>
</comment>
<comment type="interaction">
    <interactant intactId="EBI-351590">
        <id>P31943</id>
    </interactant>
    <interactant intactId="EBI-739832">
        <id>Q8TBB1</id>
        <label>LNX1</label>
    </interactant>
    <organismsDiffer>false</organismsDiffer>
    <experiments>3</experiments>
</comment>
<comment type="interaction">
    <interactant intactId="EBI-351590">
        <id>P31943</id>
    </interactant>
    <interactant intactId="EBI-716006">
        <id>Q9Y5V3</id>
        <label>MAGED1</label>
    </interactant>
    <organismsDiffer>false</organismsDiffer>
    <experiments>3</experiments>
</comment>
<comment type="interaction">
    <interactant intactId="EBI-351590">
        <id>P31943</id>
    </interactant>
    <interactant intactId="EBI-2805004">
        <id>Q9NR56</id>
        <label>MBNL1</label>
    </interactant>
    <organismsDiffer>false</organismsDiffer>
    <experiments>2</experiments>
</comment>
<comment type="interaction">
    <interactant intactId="EBI-351590">
        <id>P31943</id>
    </interactant>
    <interactant intactId="EBI-2513715">
        <id>Q96EL3</id>
        <label>MRPL53</label>
    </interactant>
    <organismsDiffer>false</organismsDiffer>
    <experiments>4</experiments>
</comment>
<comment type="interaction">
    <interactant intactId="EBI-351590">
        <id>P31943</id>
    </interactant>
    <interactant intactId="EBI-2462339">
        <id>Q96DH6</id>
        <label>MSI2</label>
    </interactant>
    <organismsDiffer>false</organismsDiffer>
    <experiments>4</experiments>
</comment>
<comment type="interaction">
    <interactant intactId="EBI-351590">
        <id>P31943</id>
    </interactant>
    <interactant intactId="EBI-2858213">
        <id>Q86VE0</id>
        <label>MYPOP</label>
    </interactant>
    <organismsDiffer>false</organismsDiffer>
    <experiments>3</experiments>
</comment>
<comment type="interaction">
    <interactant intactId="EBI-351590">
        <id>P31943</id>
    </interactant>
    <interactant intactId="EBI-10271199">
        <id>Q8NI38</id>
        <label>NFKBID</label>
    </interactant>
    <organismsDiffer>false</organismsDiffer>
    <experiments>3</experiments>
</comment>
<comment type="interaction">
    <interactant intactId="EBI-351590">
        <id>P31943</id>
    </interactant>
    <interactant intactId="EBI-2949792">
        <id>Q9BRJ7</id>
        <label>NUDT16L1</label>
    </interactant>
    <organismsDiffer>false</organismsDiffer>
    <experiments>4</experiments>
</comment>
<comment type="interaction">
    <interactant intactId="EBI-351590">
        <id>P31943</id>
    </interactant>
    <interactant intactId="EBI-12813389">
        <id>Q8TDS5</id>
        <label>OXER1</label>
    </interactant>
    <organismsDiffer>false</organismsDiffer>
    <experiments>3</experiments>
</comment>
<comment type="interaction">
    <interactant intactId="EBI-351590">
        <id>P31943</id>
    </interactant>
    <interactant intactId="EBI-11022007">
        <id>Q9HBE1-4</id>
        <label>PATZ1</label>
    </interactant>
    <organismsDiffer>false</organismsDiffer>
    <experiments>6</experiments>
</comment>
<comment type="interaction">
    <interactant intactId="EBI-351590">
        <id>P31943</id>
    </interactant>
    <interactant intactId="EBI-12181987">
        <id>P50542-3</id>
        <label>PEX5</label>
    </interactant>
    <organismsDiffer>false</organismsDiffer>
    <experiments>3</experiments>
</comment>
<comment type="interaction">
    <interactant intactId="EBI-351590">
        <id>P31943</id>
    </interactant>
    <interactant intactId="EBI-1055079">
        <id>O15160</id>
        <label>POLR1C</label>
    </interactant>
    <organismsDiffer>false</organismsDiffer>
    <experiments>4</experiments>
</comment>
<comment type="interaction">
    <interactant intactId="EBI-351590">
        <id>P31943</id>
    </interactant>
    <interactant intactId="EBI-744023">
        <id>Q9BTL3</id>
        <label>RAMAC</label>
    </interactant>
    <organismsDiffer>false</organismsDiffer>
    <experiments>3</experiments>
</comment>
<comment type="interaction">
    <interactant intactId="EBI-351590">
        <id>P31943</id>
    </interactant>
    <interactant intactId="EBI-11963050">
        <id>O43251-10</id>
        <label>RBFOX2</label>
    </interactant>
    <organismsDiffer>false</organismsDiffer>
    <experiments>3</experiments>
</comment>
<comment type="interaction">
    <interactant intactId="EBI-351590">
        <id>P31943</id>
    </interactant>
    <interactant intactId="EBI-2840723">
        <id>Q9H0Z9</id>
        <label>RBM38</label>
    </interactant>
    <organismsDiffer>false</organismsDiffer>
    <experiments>3</experiments>
</comment>
<comment type="interaction">
    <interactant intactId="EBI-351590">
        <id>P31943</id>
    </interactant>
    <interactant intactId="EBI-2340927">
        <id>P78317</id>
        <label>RNF4</label>
    </interactant>
    <organismsDiffer>false</organismsDiffer>
    <experiments>3</experiments>
</comment>
<comment type="interaction">
    <interactant intactId="EBI-351590">
        <id>P31943</id>
    </interactant>
    <interactant intactId="EBI-12000762">
        <id>Q7Z5V6-2</id>
        <label>SAXO4</label>
    </interactant>
    <organismsDiffer>false</organismsDiffer>
    <experiments>3</experiments>
</comment>
<comment type="interaction">
    <interactant intactId="EBI-351590">
        <id>P31943</id>
    </interactant>
    <interactant intactId="EBI-372475">
        <id>P14678-2</id>
        <label>SNRPB</label>
    </interactant>
    <organismsDiffer>false</organismsDiffer>
    <experiments>3</experiments>
</comment>
<comment type="interaction">
    <interactant intactId="EBI-351590">
        <id>P31943</id>
    </interactant>
    <interactant intactId="EBI-766589">
        <id>P09234</id>
        <label>SNRPC</label>
    </interactant>
    <organismsDiffer>false</organismsDiffer>
    <experiments>3</experiments>
</comment>
<comment type="interaction">
    <interactant intactId="EBI-351590">
        <id>P31943</id>
    </interactant>
    <interactant intactId="EBI-742688">
        <id>Q9NZD8</id>
        <label>SPG21</label>
    </interactant>
    <organismsDiffer>false</organismsDiffer>
    <experiments>3</experiments>
</comment>
<comment type="interaction">
    <interactant intactId="EBI-351590">
        <id>P31943</id>
    </interactant>
    <interactant intactId="EBI-372899">
        <id>Q13148</id>
        <label>TARDBP</label>
    </interactant>
    <organismsDiffer>false</organismsDiffer>
    <experiments>7</experiments>
</comment>
<comment type="interaction">
    <interactant intactId="EBI-351590">
        <id>P31943</id>
    </interactant>
    <interactant intactId="EBI-8644516">
        <id>Q9BXF9</id>
        <label>TEKT3</label>
    </interactant>
    <organismsDiffer>false</organismsDiffer>
    <experiments>3</experiments>
</comment>
<comment type="interaction">
    <interactant intactId="EBI-351590">
        <id>P31943</id>
    </interactant>
    <interactant intactId="EBI-750487">
        <id>Q8WW24</id>
        <label>TEKT4</label>
    </interactant>
    <organismsDiffer>false</organismsDiffer>
    <experiments>3</experiments>
</comment>
<comment type="interaction">
    <interactant intactId="EBI-351590">
        <id>P31943</id>
    </interactant>
    <interactant intactId="EBI-10180829">
        <id>Q7KZS0</id>
        <label>UBE2I</label>
    </interactant>
    <organismsDiffer>false</organismsDiffer>
    <experiments>3</experiments>
</comment>
<comment type="subcellular location">
    <subcellularLocation>
        <location>Nucleus</location>
        <location>Nucleoplasm</location>
    </subcellularLocation>
</comment>
<comment type="tissue specificity">
    <text>Expressed ubiquitously.</text>
</comment>
<comment type="induction">
    <text evidence="5">Up-regulated in myotonic dystrophy pathophysiology (DM).</text>
</comment>
<comment type="domain">
    <text>Each quasi-RRM repeat bound poly(RG), while only the N-terminal QRRM bound poly(RC) and poly(RU). None of the repeats bound detectable amounts of poly(RA).</text>
</comment>
<comment type="disease" evidence="7 8">
    <disease id="DI-06524">
        <name>Neurodevelopmental disorder with craniofacial dysmorphism and skeletal defects</name>
        <acronym>NEDCDS</acronym>
        <description>An autosomal dominant disorder characterized by global developmental delay, severely impaired intellectual development with poor or absent speech, characteristic dysmorphic facial features, and variable skeletal abnormalities. Additional features include feeding difficulties, inability to walk or walking with an abnormal gait, and cerebellar or other abnormalities on brain imaging.</description>
        <dbReference type="MIM" id="620083"/>
    </disease>
    <text>The disease is caused by variants affecting the gene represented in this entry.</text>
</comment>
<organism>
    <name type="scientific">Homo sapiens</name>
    <name type="common">Human</name>
    <dbReference type="NCBI Taxonomy" id="9606"/>
    <lineage>
        <taxon>Eukaryota</taxon>
        <taxon>Metazoa</taxon>
        <taxon>Chordata</taxon>
        <taxon>Craniata</taxon>
        <taxon>Vertebrata</taxon>
        <taxon>Euteleostomi</taxon>
        <taxon>Mammalia</taxon>
        <taxon>Eutheria</taxon>
        <taxon>Euarchontoglires</taxon>
        <taxon>Primates</taxon>
        <taxon>Haplorrhini</taxon>
        <taxon>Catarrhini</taxon>
        <taxon>Hominidae</taxon>
        <taxon>Homo</taxon>
    </lineage>
</organism>
<protein>
    <recommendedName>
        <fullName>Heterogeneous nuclear ribonucleoprotein H</fullName>
        <shortName>hnRNP H</shortName>
    </recommendedName>
    <component>
        <recommendedName>
            <fullName>Heterogeneous nuclear ribonucleoprotein H, N-terminally processed</fullName>
        </recommendedName>
    </component>
</protein>
<dbReference type="EMBL" id="L22009">
    <property type="protein sequence ID" value="AAA91346.1"/>
    <property type="molecule type" value="mRNA"/>
</dbReference>
<dbReference type="EMBL" id="CR456778">
    <property type="protein sequence ID" value="CAG33059.1"/>
    <property type="molecule type" value="mRNA"/>
</dbReference>
<dbReference type="EMBL" id="AK124530">
    <property type="protein sequence ID" value="BAG54048.1"/>
    <property type="molecule type" value="mRNA"/>
</dbReference>
<dbReference type="EMBL" id="CH471165">
    <property type="protein sequence ID" value="EAW53807.1"/>
    <property type="molecule type" value="Genomic_DNA"/>
</dbReference>
<dbReference type="EMBL" id="CH471165">
    <property type="protein sequence ID" value="EAW53808.1"/>
    <property type="molecule type" value="Genomic_DNA"/>
</dbReference>
<dbReference type="EMBL" id="BC001348">
    <property type="protein sequence ID" value="AAH01348.1"/>
    <property type="molecule type" value="mRNA"/>
</dbReference>
<dbReference type="CCDS" id="CCDS4446.1"/>
<dbReference type="PIR" id="I39358">
    <property type="entry name" value="I39358"/>
</dbReference>
<dbReference type="RefSeq" id="NP_001244222.1">
    <property type="nucleotide sequence ID" value="NM_001257293.2"/>
</dbReference>
<dbReference type="RefSeq" id="NP_001351162.1">
    <property type="nucleotide sequence ID" value="NM_001364233.2"/>
</dbReference>
<dbReference type="RefSeq" id="NP_001351163.1">
    <property type="nucleotide sequence ID" value="NM_001364234.2"/>
</dbReference>
<dbReference type="RefSeq" id="NP_001351164.1">
    <property type="nucleotide sequence ID" value="NM_001364235.2"/>
</dbReference>
<dbReference type="RefSeq" id="NP_001351165.1">
    <property type="nucleotide sequence ID" value="NM_001364236.2"/>
</dbReference>
<dbReference type="RefSeq" id="NP_001351166.1">
    <property type="nucleotide sequence ID" value="NM_001364237.2"/>
</dbReference>
<dbReference type="RefSeq" id="NP_001351167.1">
    <property type="nucleotide sequence ID" value="NM_001364238.2"/>
</dbReference>
<dbReference type="RefSeq" id="NP_001351168.1">
    <property type="nucleotide sequence ID" value="NM_001364239.2"/>
</dbReference>
<dbReference type="RefSeq" id="NP_001382111.1">
    <property type="nucleotide sequence ID" value="NM_001395182.1"/>
</dbReference>
<dbReference type="RefSeq" id="NP_005511.1">
    <property type="nucleotide sequence ID" value="NM_005520.3"/>
</dbReference>
<dbReference type="RefSeq" id="XP_016864904.1">
    <property type="nucleotide sequence ID" value="XM_017009415.1"/>
</dbReference>
<dbReference type="RefSeq" id="XP_016864905.1">
    <property type="nucleotide sequence ID" value="XM_017009416.1"/>
</dbReference>
<dbReference type="RefSeq" id="XP_016864906.1">
    <property type="nucleotide sequence ID" value="XM_017009417.1"/>
</dbReference>
<dbReference type="PDB" id="2LXU">
    <property type="method" value="NMR"/>
    <property type="chains" value="A=7-111"/>
</dbReference>
<dbReference type="PDB" id="6DHS">
    <property type="method" value="X-ray"/>
    <property type="resolution" value="3.50 A"/>
    <property type="chains" value="A/B/C/D=10-194"/>
</dbReference>
<dbReference type="PDB" id="7ZUG">
    <property type="method" value="X-ray"/>
    <property type="resolution" value="1.07 A"/>
    <property type="chains" value="AAA=94-194"/>
</dbReference>
<dbReference type="PDBsum" id="2LXU"/>
<dbReference type="PDBsum" id="6DHS"/>
<dbReference type="PDBsum" id="7ZUG"/>
<dbReference type="SMR" id="P31943"/>
<dbReference type="BioGRID" id="109428">
    <property type="interactions" value="1674"/>
</dbReference>
<dbReference type="CORUM" id="P31943"/>
<dbReference type="FunCoup" id="P31943">
    <property type="interactions" value="2768"/>
</dbReference>
<dbReference type="IntAct" id="P31943">
    <property type="interactions" value="249"/>
</dbReference>
<dbReference type="MINT" id="P31943"/>
<dbReference type="STRING" id="9606.ENSP00000349168"/>
<dbReference type="ChEMBL" id="CHEMBL3797013"/>
<dbReference type="DrugBank" id="DB09130">
    <property type="generic name" value="Copper"/>
</dbReference>
<dbReference type="GlyCosmos" id="P31943">
    <property type="glycosylation" value="3 sites, 1 glycan"/>
</dbReference>
<dbReference type="GlyGen" id="P31943">
    <property type="glycosylation" value="7 sites, 5 N-linked glycans (1 site), 1 O-linked glycan (6 sites)"/>
</dbReference>
<dbReference type="iPTMnet" id="P31943"/>
<dbReference type="MetOSite" id="P31943"/>
<dbReference type="PhosphoSitePlus" id="P31943"/>
<dbReference type="SwissPalm" id="P31943"/>
<dbReference type="BioMuta" id="HNRNPH1"/>
<dbReference type="DMDM" id="1710632"/>
<dbReference type="REPRODUCTION-2DPAGE" id="IPI00013881"/>
<dbReference type="REPRODUCTION-2DPAGE" id="P31943"/>
<dbReference type="jPOST" id="P31943"/>
<dbReference type="MassIVE" id="P31943"/>
<dbReference type="PaxDb" id="9606-ENSP00000349168"/>
<dbReference type="PeptideAtlas" id="P31943"/>
<dbReference type="PRIDE" id="P31943"/>
<dbReference type="ProteomicsDB" id="54814"/>
<dbReference type="Pumba" id="P31943"/>
<dbReference type="Antibodypedia" id="17692">
    <property type="antibodies" value="317 antibodies from 29 providers"/>
</dbReference>
<dbReference type="DNASU" id="3187"/>
<dbReference type="Ensembl" id="ENST00000356731.9">
    <property type="protein sequence ID" value="ENSP00000349168.5"/>
    <property type="gene ID" value="ENSG00000169045.19"/>
</dbReference>
<dbReference type="Ensembl" id="ENST00000393432.9">
    <property type="protein sequence ID" value="ENSP00000377082.4"/>
    <property type="gene ID" value="ENSG00000169045.19"/>
</dbReference>
<dbReference type="Ensembl" id="ENST00000442819.6">
    <property type="protein sequence ID" value="ENSP00000397797.2"/>
    <property type="gene ID" value="ENSG00000169045.19"/>
</dbReference>
<dbReference type="Ensembl" id="ENST00000505811.6">
    <property type="protein sequence ID" value="ENSP00000424087.2"/>
    <property type="gene ID" value="ENSG00000169045.19"/>
</dbReference>
<dbReference type="Ensembl" id="ENST00000513225.6">
    <property type="protein sequence ID" value="ENSP00000426518.2"/>
    <property type="gene ID" value="ENSG00000169045.19"/>
</dbReference>
<dbReference type="Ensembl" id="ENST00000515158.6">
    <property type="protein sequence ID" value="ENSP00000421695.2"/>
    <property type="gene ID" value="ENSG00000169045.19"/>
</dbReference>
<dbReference type="Ensembl" id="ENST00000515714.6">
    <property type="protein sequence ID" value="ENSP00000425343.2"/>
    <property type="gene ID" value="ENSG00000169045.19"/>
</dbReference>
<dbReference type="Ensembl" id="ENST00000521116.6">
    <property type="protein sequence ID" value="ENSP00000429661.2"/>
    <property type="gene ID" value="ENSG00000169045.19"/>
</dbReference>
<dbReference type="Ensembl" id="ENST00000638505.3">
    <property type="protein sequence ID" value="ENSP00000492076.2"/>
    <property type="gene ID" value="ENSG00000284254.4"/>
</dbReference>
<dbReference type="Ensembl" id="ENST00000710500.1">
    <property type="protein sequence ID" value="ENSP00000518308.1"/>
    <property type="gene ID" value="ENSG00000284254.4"/>
</dbReference>
<dbReference type="Ensembl" id="ENST00000710502.1">
    <property type="protein sequence ID" value="ENSP00000518309.1"/>
    <property type="gene ID" value="ENSG00000284254.4"/>
</dbReference>
<dbReference type="Ensembl" id="ENST00000710510.1">
    <property type="protein sequence ID" value="ENSP00000518316.1"/>
    <property type="gene ID" value="ENSG00000284254.4"/>
</dbReference>
<dbReference type="Ensembl" id="ENST00000710511.1">
    <property type="protein sequence ID" value="ENSP00000518317.1"/>
    <property type="gene ID" value="ENSG00000284254.4"/>
</dbReference>
<dbReference type="Ensembl" id="ENST00000710512.1">
    <property type="protein sequence ID" value="ENSP00000518318.1"/>
    <property type="gene ID" value="ENSG00000284254.4"/>
</dbReference>
<dbReference type="Ensembl" id="ENST00000710513.1">
    <property type="protein sequence ID" value="ENSP00000518319.1"/>
    <property type="gene ID" value="ENSG00000284254.4"/>
</dbReference>
<dbReference type="Ensembl" id="ENST00000710515.1">
    <property type="protein sequence ID" value="ENSP00000518321.1"/>
    <property type="gene ID" value="ENSG00000284254.4"/>
</dbReference>
<dbReference type="GeneID" id="3187"/>
<dbReference type="KEGG" id="hsa:3187"/>
<dbReference type="MANE-Select" id="ENST00000393432.9">
    <property type="protein sequence ID" value="ENSP00000377082.4"/>
    <property type="RefSeq nucleotide sequence ID" value="NM_001257293.2"/>
    <property type="RefSeq protein sequence ID" value="NP_001244222.1"/>
</dbReference>
<dbReference type="UCSC" id="uc003mke.5">
    <property type="organism name" value="human"/>
</dbReference>
<dbReference type="AGR" id="HGNC:5041"/>
<dbReference type="CTD" id="3187"/>
<dbReference type="DisGeNET" id="3187"/>
<dbReference type="GeneCards" id="HNRNPH1"/>
<dbReference type="HGNC" id="HGNC:5041">
    <property type="gene designation" value="HNRNPH1"/>
</dbReference>
<dbReference type="HPA" id="ENSG00000169045">
    <property type="expression patterns" value="Low tissue specificity"/>
</dbReference>
<dbReference type="MalaCards" id="HNRNPH1"/>
<dbReference type="MIM" id="601035">
    <property type="type" value="gene"/>
</dbReference>
<dbReference type="MIM" id="620083">
    <property type="type" value="phenotype"/>
</dbReference>
<dbReference type="neXtProt" id="NX_P31943"/>
<dbReference type="OpenTargets" id="ENSG00000169045"/>
<dbReference type="Orphanet" id="662207">
    <property type="disease" value="Neurodevelopmental delay-brain malformations-skeletal defects-intellectual disability syndrome"/>
</dbReference>
<dbReference type="PharmGKB" id="PA162391284"/>
<dbReference type="VEuPathDB" id="HostDB:ENSG00000169045"/>
<dbReference type="eggNOG" id="KOG4211">
    <property type="taxonomic scope" value="Eukaryota"/>
</dbReference>
<dbReference type="GeneTree" id="ENSGT00940000153503"/>
<dbReference type="HOGENOM" id="CLU_032003_1_0_1"/>
<dbReference type="InParanoid" id="P31943"/>
<dbReference type="OrthoDB" id="431068at2759"/>
<dbReference type="PAN-GO" id="P31943">
    <property type="GO annotations" value="4 GO annotations based on evolutionary models"/>
</dbReference>
<dbReference type="PhylomeDB" id="P31943"/>
<dbReference type="TreeFam" id="TF316157"/>
<dbReference type="PathwayCommons" id="P31943"/>
<dbReference type="Reactome" id="R-HSA-6803529">
    <property type="pathway name" value="FGFR2 alternative splicing"/>
</dbReference>
<dbReference type="Reactome" id="R-HSA-72163">
    <property type="pathway name" value="mRNA Splicing - Major Pathway"/>
</dbReference>
<dbReference type="Reactome" id="R-HSA-72203">
    <property type="pathway name" value="Processing of Capped Intron-Containing Pre-mRNA"/>
</dbReference>
<dbReference type="SignaLink" id="P31943"/>
<dbReference type="SIGNOR" id="P31943"/>
<dbReference type="BioGRID-ORCS" id="3187">
    <property type="hits" value="699 hits in 1173 CRISPR screens"/>
</dbReference>
<dbReference type="CD-CODE" id="1A18FFC4">
    <property type="entry name" value="Paraspeckle"/>
</dbReference>
<dbReference type="CD-CODE" id="91857CE7">
    <property type="entry name" value="Nucleolus"/>
</dbReference>
<dbReference type="CD-CODE" id="DEE660B4">
    <property type="entry name" value="Stress granule"/>
</dbReference>
<dbReference type="ChiTaRS" id="HNRNPH1">
    <property type="organism name" value="human"/>
</dbReference>
<dbReference type="EvolutionaryTrace" id="P31943"/>
<dbReference type="GeneWiki" id="HNRPH1"/>
<dbReference type="GenomeRNAi" id="3187"/>
<dbReference type="Pharos" id="P31943">
    <property type="development level" value="Tbio"/>
</dbReference>
<dbReference type="PRO" id="PR:P31943"/>
<dbReference type="Proteomes" id="UP000005640">
    <property type="component" value="Chromosome 5"/>
</dbReference>
<dbReference type="RNAct" id="P31943">
    <property type="molecule type" value="protein"/>
</dbReference>
<dbReference type="Bgee" id="ENSG00000169045">
    <property type="expression patterns" value="Expressed in right lobe of thyroid gland and 120 other cell types or tissues"/>
</dbReference>
<dbReference type="ExpressionAtlas" id="P31943">
    <property type="expression patterns" value="baseline and differential"/>
</dbReference>
<dbReference type="GO" id="GO:0071013">
    <property type="term" value="C:catalytic step 2 spliceosome"/>
    <property type="evidence" value="ECO:0000314"/>
    <property type="project" value="UniProtKB"/>
</dbReference>
<dbReference type="GO" id="GO:0005829">
    <property type="term" value="C:cytosol"/>
    <property type="evidence" value="ECO:0000314"/>
    <property type="project" value="HPA"/>
</dbReference>
<dbReference type="GO" id="GO:0016020">
    <property type="term" value="C:membrane"/>
    <property type="evidence" value="ECO:0007005"/>
    <property type="project" value="UniProtKB"/>
</dbReference>
<dbReference type="GO" id="GO:0005654">
    <property type="term" value="C:nucleoplasm"/>
    <property type="evidence" value="ECO:0000314"/>
    <property type="project" value="HPA"/>
</dbReference>
<dbReference type="GO" id="GO:0005634">
    <property type="term" value="C:nucleus"/>
    <property type="evidence" value="ECO:0000314"/>
    <property type="project" value="UniProtKB"/>
</dbReference>
<dbReference type="GO" id="GO:1990904">
    <property type="term" value="C:ribonucleoprotein complex"/>
    <property type="evidence" value="ECO:0000318"/>
    <property type="project" value="GO_Central"/>
</dbReference>
<dbReference type="GO" id="GO:0042802">
    <property type="term" value="F:identical protein binding"/>
    <property type="evidence" value="ECO:0000353"/>
    <property type="project" value="IntAct"/>
</dbReference>
<dbReference type="GO" id="GO:0008266">
    <property type="term" value="F:poly(U) RNA binding"/>
    <property type="evidence" value="ECO:0000304"/>
    <property type="project" value="ProtInc"/>
</dbReference>
<dbReference type="GO" id="GO:0003723">
    <property type="term" value="F:RNA binding"/>
    <property type="evidence" value="ECO:0000314"/>
    <property type="project" value="UniProtKB"/>
</dbReference>
<dbReference type="GO" id="GO:0000398">
    <property type="term" value="P:mRNA splicing, via spliceosome"/>
    <property type="evidence" value="ECO:0000305"/>
    <property type="project" value="UniProtKB"/>
</dbReference>
<dbReference type="GO" id="GO:0043484">
    <property type="term" value="P:regulation of RNA splicing"/>
    <property type="evidence" value="ECO:0000314"/>
    <property type="project" value="UniProtKB"/>
</dbReference>
<dbReference type="GO" id="GO:0006396">
    <property type="term" value="P:RNA processing"/>
    <property type="evidence" value="ECO:0000304"/>
    <property type="project" value="ProtInc"/>
</dbReference>
<dbReference type="CDD" id="cd12729">
    <property type="entry name" value="RRM1_hnRNPH_hnRNPH2_hnRNPF"/>
    <property type="match status" value="1"/>
</dbReference>
<dbReference type="CDD" id="cd12731">
    <property type="entry name" value="RRM2_hnRNPH_hnRNPH2_hnRNPF"/>
    <property type="match status" value="1"/>
</dbReference>
<dbReference type="CDD" id="cd12734">
    <property type="entry name" value="RRM3_hnRNPH_hnRNPH2_hnRNPF"/>
    <property type="match status" value="1"/>
</dbReference>
<dbReference type="FunFam" id="3.30.70.330:FF:000071">
    <property type="entry name" value="heterogeneous nuclear ribonucleoprotein H isoform X1"/>
    <property type="match status" value="1"/>
</dbReference>
<dbReference type="FunFam" id="3.30.70.330:FF:000075">
    <property type="entry name" value="Heterogeneous nuclear ribonucleoprotein H1 (H)"/>
    <property type="match status" value="1"/>
</dbReference>
<dbReference type="FunFam" id="3.30.70.330:FF:000031">
    <property type="entry name" value="Heterogeneous nuclear ribonucleoprotein h3 isoform"/>
    <property type="match status" value="1"/>
</dbReference>
<dbReference type="Gene3D" id="3.30.70.330">
    <property type="match status" value="3"/>
</dbReference>
<dbReference type="InterPro" id="IPR050666">
    <property type="entry name" value="ESRP"/>
</dbReference>
<dbReference type="InterPro" id="IPR012677">
    <property type="entry name" value="Nucleotide-bd_a/b_plait_sf"/>
</dbReference>
<dbReference type="InterPro" id="IPR035979">
    <property type="entry name" value="RBD_domain_sf"/>
</dbReference>
<dbReference type="InterPro" id="IPR000504">
    <property type="entry name" value="RRM_dom"/>
</dbReference>
<dbReference type="InterPro" id="IPR012996">
    <property type="entry name" value="Znf_CHHC"/>
</dbReference>
<dbReference type="PANTHER" id="PTHR13976">
    <property type="entry name" value="HETEROGENEOUS NUCLEAR RIBONUCLEOPROTEIN-RELATED"/>
    <property type="match status" value="1"/>
</dbReference>
<dbReference type="Pfam" id="PF00076">
    <property type="entry name" value="RRM_1"/>
    <property type="match status" value="3"/>
</dbReference>
<dbReference type="Pfam" id="PF08080">
    <property type="entry name" value="zf-RNPHF"/>
    <property type="match status" value="1"/>
</dbReference>
<dbReference type="SMART" id="SM00360">
    <property type="entry name" value="RRM"/>
    <property type="match status" value="3"/>
</dbReference>
<dbReference type="SUPFAM" id="SSF54928">
    <property type="entry name" value="RNA-binding domain, RBD"/>
    <property type="match status" value="3"/>
</dbReference>
<dbReference type="PROSITE" id="PS50102">
    <property type="entry name" value="RRM"/>
    <property type="match status" value="3"/>
</dbReference>
<sequence>MMLGTEGGEGFVVKVRGLPWSCSADEVQRFFSDCKIQNGAQGIRFIYTREGRPSGEAFVELESEDEVKLALKKDRETMGHRYVEVFKSNNVEMDWVLKHTGPNSPDTANDGFVRLRGLPFGCSKEEIVQFFSGLEIVPNGITLPVDFQGRSTGEAFVQFASQEIAEKALKKHKERIGHRYIEIFKSSRAEVRTHYDPPRKLMAMQRPGPYDRPGAGRGYNSIGRGAGFERMRRGAYGGGYGGYDDYNGYNDGYGFGSDRFGRDLNYCFSGMSDHRYGDGGSTFQSTTGHCVHMRGLPYRATENDIYNFFSPLNPVRVHIEIGPDGRVTGEADVEFATHEDAVAAMSKDKANMQHRYVELFLNSTAGASGGAYEHRYVELFLNSTAGASGGAYGSQMMGGMGLSNQSSYGGPASQQLSGGYGGGYGGQSSMSGYDQVLQENSSDFQSNIA</sequence>
<evidence type="ECO:0000250" key="1">
    <source>
        <dbReference type="UniProtKB" id="P55795"/>
    </source>
</evidence>
<evidence type="ECO:0000255" key="2">
    <source>
        <dbReference type="PROSITE-ProRule" id="PRU00176"/>
    </source>
</evidence>
<evidence type="ECO:0000269" key="3">
    <source>
    </source>
</evidence>
<evidence type="ECO:0000269" key="4">
    <source>
    </source>
</evidence>
<evidence type="ECO:0000269" key="5">
    <source>
    </source>
</evidence>
<evidence type="ECO:0000269" key="6">
    <source>
    </source>
</evidence>
<evidence type="ECO:0000269" key="7">
    <source>
    </source>
</evidence>
<evidence type="ECO:0000269" key="8">
    <source>
    </source>
</evidence>
<evidence type="ECO:0000269" key="9">
    <source ref="6"/>
</evidence>
<evidence type="ECO:0000269" key="10">
    <source ref="7"/>
</evidence>
<evidence type="ECO:0000305" key="11"/>
<evidence type="ECO:0007744" key="12">
    <source>
    </source>
</evidence>
<evidence type="ECO:0007744" key="13">
    <source>
    </source>
</evidence>
<evidence type="ECO:0007744" key="14">
    <source>
    </source>
</evidence>
<evidence type="ECO:0007744" key="15">
    <source>
    </source>
</evidence>
<evidence type="ECO:0007744" key="16">
    <source>
    </source>
</evidence>
<evidence type="ECO:0007744" key="17">
    <source>
    </source>
</evidence>
<evidence type="ECO:0007744" key="18">
    <source>
    </source>
</evidence>
<evidence type="ECO:0007744" key="19">
    <source>
    </source>
</evidence>
<evidence type="ECO:0007744" key="20">
    <source>
    </source>
</evidence>
<evidence type="ECO:0007744" key="21">
    <source>
    </source>
</evidence>
<evidence type="ECO:0007744" key="22">
    <source>
    </source>
</evidence>
<evidence type="ECO:0007744" key="23">
    <source>
    </source>
</evidence>
<evidence type="ECO:0007744" key="24">
    <source>
    </source>
</evidence>
<evidence type="ECO:0007829" key="25">
    <source>
        <dbReference type="PDB" id="2LXU"/>
    </source>
</evidence>
<evidence type="ECO:0007829" key="26">
    <source>
        <dbReference type="PDB" id="6DHS"/>
    </source>
</evidence>
<feature type="chain" id="PRO_0000367119" description="Heterogeneous nuclear ribonucleoprotein H">
    <location>
        <begin position="1"/>
        <end position="449"/>
    </location>
</feature>
<feature type="initiator methionine" description="Removed; alternate" evidence="9 10 16 20 21">
    <location>
        <position position="1"/>
    </location>
</feature>
<feature type="chain" id="PRO_0000081857" description="Heterogeneous nuclear ribonucleoprotein H, N-terminally processed">
    <location>
        <begin position="2"/>
        <end position="449"/>
    </location>
</feature>
<feature type="domain" description="RRM 1" evidence="2">
    <location>
        <begin position="11"/>
        <end position="90"/>
    </location>
</feature>
<feature type="domain" description="RRM 2" evidence="2">
    <location>
        <begin position="111"/>
        <end position="188"/>
    </location>
</feature>
<feature type="repeat" description="1-1">
    <location>
        <begin position="234"/>
        <end position="249"/>
    </location>
</feature>
<feature type="domain" description="RRM 3" evidence="2">
    <location>
        <begin position="289"/>
        <end position="364"/>
    </location>
</feature>
<feature type="repeat" description="2-1">
    <location>
        <begin position="354"/>
        <end position="372"/>
    </location>
</feature>
<feature type="repeat" description="2-2">
    <location>
        <begin position="374"/>
        <end position="392"/>
    </location>
</feature>
<feature type="repeat" description="1-2">
    <location>
        <begin position="418"/>
        <end position="433"/>
    </location>
</feature>
<feature type="region of interest" description="2 X 16 AA Gly-rich approximate repeats">
    <location>
        <begin position="234"/>
        <end position="433"/>
    </location>
</feature>
<feature type="region of interest" description="2 X 19 AA perfect repeats">
    <location>
        <begin position="354"/>
        <end position="392"/>
    </location>
</feature>
<feature type="modified residue" description="N-acetylmethionine; in Heterogeneous nuclear ribonucleoprotein H; alternate" evidence="9 16 21">
    <location>
        <position position="1"/>
    </location>
</feature>
<feature type="modified residue" description="N-acetylmethionine; in Heterogeneous nuclear ribonucleoprotein H, N-terminally processed" evidence="9 16 20 21">
    <location>
        <position position="2"/>
    </location>
</feature>
<feature type="modified residue" description="Phosphoserine" evidence="17 22">
    <location>
        <position position="23"/>
    </location>
</feature>
<feature type="modified residue" description="Phosphoserine" evidence="22">
    <location>
        <position position="54"/>
    </location>
</feature>
<feature type="modified residue" description="Phosphoserine" evidence="13 14 15 17 18 19 22">
    <location>
        <position position="63"/>
    </location>
</feature>
<feature type="modified residue" description="Dimethylated arginine; alternate" evidence="9">
    <location>
        <position position="233"/>
    </location>
</feature>
<feature type="modified residue" description="Omega-N-methylarginine; alternate" evidence="9 23">
    <location>
        <position position="233"/>
    </location>
</feature>
<feature type="modified residue" description="Phosphotyrosine" evidence="12">
    <location>
        <position position="246"/>
    </location>
</feature>
<feature type="modified residue" description="Phosphoserine" evidence="1">
    <location>
        <position position="310"/>
    </location>
</feature>
<feature type="cross-link" description="Glycyl lysine isopeptide (Lys-Gly) (interchain with G-Cter in SUMO2)" evidence="24">
    <location>
        <position position="35"/>
    </location>
</feature>
<feature type="cross-link" description="Glycyl lysine isopeptide (Lys-Gly) (interchain with G-Cter in SUMO2)" evidence="24">
    <location>
        <position position="87"/>
    </location>
</feature>
<feature type="cross-link" description="Glycyl lysine isopeptide (Lys-Gly) (interchain with G-Cter in SUMO2)" evidence="24">
    <location>
        <position position="98"/>
    </location>
</feature>
<feature type="sequence variant" id="VAR_087781" description="In NEDCDS." evidence="8">
    <original>R</original>
    <variation>Q</variation>
    <location>
        <position position="206"/>
    </location>
</feature>
<feature type="sequence variant" id="VAR_087782" description="In NEDCDS." evidence="7 8">
    <original>R</original>
    <variation>W</variation>
    <location>
        <position position="206"/>
    </location>
</feature>
<feature type="sequence variant" id="VAR_087783" description="In NEDCDS; uncertain significance." evidence="8">
    <location>
        <begin position="373"/>
        <end position="392"/>
    </location>
</feature>
<feature type="sequence conflict" description="In Ref. 2; CAG33059." evidence="11" ref="2">
    <original>R</original>
    <variation>G</variation>
    <location>
        <position position="188"/>
    </location>
</feature>
<feature type="strand" evidence="26">
    <location>
        <begin position="13"/>
        <end position="17"/>
    </location>
</feature>
<feature type="helix" evidence="26">
    <location>
        <begin position="24"/>
        <end position="30"/>
    </location>
</feature>
<feature type="turn" evidence="25">
    <location>
        <begin position="31"/>
        <end position="33"/>
    </location>
</feature>
<feature type="turn" evidence="26">
    <location>
        <begin position="37"/>
        <end position="41"/>
    </location>
</feature>
<feature type="strand" evidence="26">
    <location>
        <begin position="42"/>
        <end position="47"/>
    </location>
</feature>
<feature type="strand" evidence="26">
    <location>
        <begin position="49"/>
        <end position="59"/>
    </location>
</feature>
<feature type="strand" evidence="26">
    <location>
        <begin position="61"/>
        <end position="65"/>
    </location>
</feature>
<feature type="helix" evidence="26">
    <location>
        <begin position="66"/>
        <end position="71"/>
    </location>
</feature>
<feature type="strand" evidence="26">
    <location>
        <begin position="75"/>
        <end position="87"/>
    </location>
</feature>
<feature type="helix" evidence="26">
    <location>
        <begin position="90"/>
        <end position="94"/>
    </location>
</feature>
<feature type="strand" evidence="26">
    <location>
        <begin position="112"/>
        <end position="117"/>
    </location>
</feature>
<feature type="helix" evidence="26">
    <location>
        <begin position="124"/>
        <end position="130"/>
    </location>
</feature>
<feature type="strand" evidence="26">
    <location>
        <begin position="132"/>
        <end position="134"/>
    </location>
</feature>
<feature type="strand" evidence="26">
    <location>
        <begin position="149"/>
        <end position="151"/>
    </location>
</feature>
<feature type="strand" evidence="26">
    <location>
        <begin position="158"/>
        <end position="160"/>
    </location>
</feature>
<feature type="helix" evidence="26">
    <location>
        <begin position="162"/>
        <end position="169"/>
    </location>
</feature>
<feature type="strand" evidence="26">
    <location>
        <begin position="182"/>
        <end position="185"/>
    </location>
</feature>
<feature type="helix" evidence="26">
    <location>
        <begin position="188"/>
        <end position="193"/>
    </location>
</feature>
<keyword id="KW-0002">3D-structure</keyword>
<keyword id="KW-0007">Acetylation</keyword>
<keyword id="KW-0903">Direct protein sequencing</keyword>
<keyword id="KW-0225">Disease variant</keyword>
<keyword id="KW-0991">Intellectual disability</keyword>
<keyword id="KW-1017">Isopeptide bond</keyword>
<keyword id="KW-0488">Methylation</keyword>
<keyword id="KW-0507">mRNA processing</keyword>
<keyword id="KW-0508">mRNA splicing</keyword>
<keyword id="KW-0539">Nucleus</keyword>
<keyword id="KW-0597">Phosphoprotein</keyword>
<keyword id="KW-1267">Proteomics identification</keyword>
<keyword id="KW-1185">Reference proteome</keyword>
<keyword id="KW-0677">Repeat</keyword>
<keyword id="KW-0687">Ribonucleoprotein</keyword>
<keyword id="KW-0694">RNA-binding</keyword>
<keyword id="KW-0747">Spliceosome</keyword>
<keyword id="KW-0832">Ubl conjugation</keyword>
<name>HNRH1_HUMAN</name>
<proteinExistence type="evidence at protein level"/>
<accession>P31943</accession>
<accession>B3KW86</accession>
<accession>D3DWQ2</accession>
<accession>Q6IBM4</accession>